<protein>
    <recommendedName>
        <fullName evidence="1">Ribosomal protein uS12 methylthiotransferase RimO</fullName>
        <shortName evidence="1">uS12 MTTase</shortName>
        <shortName evidence="1">uS12 methylthiotransferase</shortName>
        <ecNumber evidence="1">2.8.4.4</ecNumber>
    </recommendedName>
    <alternativeName>
        <fullName evidence="1">Ribosomal protein uS12 (aspartate-C(3))-methylthiotransferase</fullName>
    </alternativeName>
    <alternativeName>
        <fullName evidence="1">Ribosome maturation factor RimO</fullName>
    </alternativeName>
</protein>
<sequence length="448" mass="50832">MPKSLENTNETPKSFFITTLGCPKNTVDSMAMHQSLLKEGLLPAAGPEASDFHLVNTCTFIQDATKETIQTILDSIDIKKQNKQKLVVVGCFAERAGKEISDDLPEVDLHFGTGKYDKAGEILRKNFPLEFKDLTEFNEDLLERLTTSKGIENYSKPYSYVKISDGCNRGCHFCIIPNLRGKYRDTDSNDVLEQTKLAVKAGSKEICLVSQDTVFYGKDTDKLMDLVRSVAAVEGLEILRLLYLYPDKKTEKLLDLYREIPKIAPYLESPLQHVSKSVLKSMNRTGDYEFFKSLFQKARDIRPDLEIRTSFILGFPGETMEDVEEIIRFVEDVKPEKVNLFPYSPQEGTKGATMDGQLKDKEIARRVNLVREAYLGTLKTIHQNRIGKIYPCVVDEVLDDGAIVRRLQDAPEIDEVVYVETKDLKLGQFGKVRVDSFYELDMSGTWVD</sequence>
<organism>
    <name type="scientific">Leptospira biflexa serovar Patoc (strain Patoc 1 / Ames)</name>
    <dbReference type="NCBI Taxonomy" id="355278"/>
    <lineage>
        <taxon>Bacteria</taxon>
        <taxon>Pseudomonadati</taxon>
        <taxon>Spirochaetota</taxon>
        <taxon>Spirochaetia</taxon>
        <taxon>Leptospirales</taxon>
        <taxon>Leptospiraceae</taxon>
        <taxon>Leptospira</taxon>
    </lineage>
</organism>
<dbReference type="EC" id="2.8.4.4" evidence="1"/>
<dbReference type="EMBL" id="CP000777">
    <property type="protein sequence ID" value="ABZ93862.1"/>
    <property type="molecule type" value="Genomic_DNA"/>
</dbReference>
<dbReference type="RefSeq" id="WP_012388385.1">
    <property type="nucleotide sequence ID" value="NC_010842.1"/>
</dbReference>
<dbReference type="SMR" id="B0SGD8"/>
<dbReference type="KEGG" id="lbf:LBF_1342"/>
<dbReference type="HOGENOM" id="CLU_018697_0_1_12"/>
<dbReference type="GO" id="GO:0005829">
    <property type="term" value="C:cytosol"/>
    <property type="evidence" value="ECO:0007669"/>
    <property type="project" value="TreeGrafter"/>
</dbReference>
<dbReference type="GO" id="GO:0051539">
    <property type="term" value="F:4 iron, 4 sulfur cluster binding"/>
    <property type="evidence" value="ECO:0007669"/>
    <property type="project" value="UniProtKB-UniRule"/>
</dbReference>
<dbReference type="GO" id="GO:0035599">
    <property type="term" value="F:aspartic acid methylthiotransferase activity"/>
    <property type="evidence" value="ECO:0007669"/>
    <property type="project" value="TreeGrafter"/>
</dbReference>
<dbReference type="GO" id="GO:0046872">
    <property type="term" value="F:metal ion binding"/>
    <property type="evidence" value="ECO:0007669"/>
    <property type="project" value="UniProtKB-KW"/>
</dbReference>
<dbReference type="GO" id="GO:0103039">
    <property type="term" value="F:protein methylthiotransferase activity"/>
    <property type="evidence" value="ECO:0007669"/>
    <property type="project" value="UniProtKB-EC"/>
</dbReference>
<dbReference type="GO" id="GO:0006400">
    <property type="term" value="P:tRNA modification"/>
    <property type="evidence" value="ECO:0007669"/>
    <property type="project" value="InterPro"/>
</dbReference>
<dbReference type="CDD" id="cd01335">
    <property type="entry name" value="Radical_SAM"/>
    <property type="match status" value="1"/>
</dbReference>
<dbReference type="FunFam" id="3.80.30.20:FF:000001">
    <property type="entry name" value="tRNA-2-methylthio-N(6)-dimethylallyladenosine synthase 2"/>
    <property type="match status" value="1"/>
</dbReference>
<dbReference type="Gene3D" id="3.40.50.12160">
    <property type="entry name" value="Methylthiotransferase, N-terminal domain"/>
    <property type="match status" value="1"/>
</dbReference>
<dbReference type="Gene3D" id="2.40.50.140">
    <property type="entry name" value="Nucleic acid-binding proteins"/>
    <property type="match status" value="1"/>
</dbReference>
<dbReference type="Gene3D" id="3.80.30.20">
    <property type="entry name" value="tm_1862 like domain"/>
    <property type="match status" value="1"/>
</dbReference>
<dbReference type="HAMAP" id="MF_01865">
    <property type="entry name" value="MTTase_RimO"/>
    <property type="match status" value="1"/>
</dbReference>
<dbReference type="InterPro" id="IPR006638">
    <property type="entry name" value="Elp3/MiaA/NifB-like_rSAM"/>
</dbReference>
<dbReference type="InterPro" id="IPR005839">
    <property type="entry name" value="Methylthiotransferase"/>
</dbReference>
<dbReference type="InterPro" id="IPR013848">
    <property type="entry name" value="Methylthiotransferase_N"/>
</dbReference>
<dbReference type="InterPro" id="IPR038135">
    <property type="entry name" value="Methylthiotransferase_N_sf"/>
</dbReference>
<dbReference type="InterPro" id="IPR012340">
    <property type="entry name" value="NA-bd_OB-fold"/>
</dbReference>
<dbReference type="InterPro" id="IPR005840">
    <property type="entry name" value="Ribosomal_uS12_MeSTrfase_RimO"/>
</dbReference>
<dbReference type="InterPro" id="IPR007197">
    <property type="entry name" value="rSAM"/>
</dbReference>
<dbReference type="InterPro" id="IPR023404">
    <property type="entry name" value="rSAM_horseshoe"/>
</dbReference>
<dbReference type="InterPro" id="IPR002792">
    <property type="entry name" value="TRAM_dom"/>
</dbReference>
<dbReference type="NCBIfam" id="TIGR00089">
    <property type="entry name" value="MiaB/RimO family radical SAM methylthiotransferase"/>
    <property type="match status" value="1"/>
</dbReference>
<dbReference type="PANTHER" id="PTHR43837">
    <property type="entry name" value="RIBOSOMAL PROTEIN S12 METHYLTHIOTRANSFERASE RIMO"/>
    <property type="match status" value="1"/>
</dbReference>
<dbReference type="PANTHER" id="PTHR43837:SF1">
    <property type="entry name" value="RIBOSOMAL PROTEIN US12 METHYLTHIOTRANSFERASE RIMO"/>
    <property type="match status" value="1"/>
</dbReference>
<dbReference type="Pfam" id="PF04055">
    <property type="entry name" value="Radical_SAM"/>
    <property type="match status" value="1"/>
</dbReference>
<dbReference type="Pfam" id="PF18693">
    <property type="entry name" value="TRAM_2"/>
    <property type="match status" value="1"/>
</dbReference>
<dbReference type="Pfam" id="PF00919">
    <property type="entry name" value="UPF0004"/>
    <property type="match status" value="1"/>
</dbReference>
<dbReference type="SFLD" id="SFLDG01082">
    <property type="entry name" value="B12-binding_domain_containing"/>
    <property type="match status" value="1"/>
</dbReference>
<dbReference type="SFLD" id="SFLDG01061">
    <property type="entry name" value="methylthiotransferase"/>
    <property type="match status" value="1"/>
</dbReference>
<dbReference type="SFLD" id="SFLDS00029">
    <property type="entry name" value="Radical_SAM"/>
    <property type="match status" value="1"/>
</dbReference>
<dbReference type="SMART" id="SM00729">
    <property type="entry name" value="Elp3"/>
    <property type="match status" value="1"/>
</dbReference>
<dbReference type="SUPFAM" id="SSF102114">
    <property type="entry name" value="Radical SAM enzymes"/>
    <property type="match status" value="1"/>
</dbReference>
<dbReference type="PROSITE" id="PS51449">
    <property type="entry name" value="MTTASE_N"/>
    <property type="match status" value="1"/>
</dbReference>
<dbReference type="PROSITE" id="PS51918">
    <property type="entry name" value="RADICAL_SAM"/>
    <property type="match status" value="1"/>
</dbReference>
<comment type="function">
    <text evidence="1">Catalyzes the methylthiolation of an aspartic acid residue of ribosomal protein uS12.</text>
</comment>
<comment type="catalytic activity">
    <reaction evidence="1">
        <text>L-aspartate(89)-[ribosomal protein uS12]-hydrogen + (sulfur carrier)-SH + AH2 + 2 S-adenosyl-L-methionine = 3-methylsulfanyl-L-aspartate(89)-[ribosomal protein uS12]-hydrogen + (sulfur carrier)-H + 5'-deoxyadenosine + L-methionine + A + S-adenosyl-L-homocysteine + 2 H(+)</text>
        <dbReference type="Rhea" id="RHEA:37087"/>
        <dbReference type="Rhea" id="RHEA-COMP:10460"/>
        <dbReference type="Rhea" id="RHEA-COMP:10461"/>
        <dbReference type="Rhea" id="RHEA-COMP:14737"/>
        <dbReference type="Rhea" id="RHEA-COMP:14739"/>
        <dbReference type="ChEBI" id="CHEBI:13193"/>
        <dbReference type="ChEBI" id="CHEBI:15378"/>
        <dbReference type="ChEBI" id="CHEBI:17319"/>
        <dbReference type="ChEBI" id="CHEBI:17499"/>
        <dbReference type="ChEBI" id="CHEBI:29917"/>
        <dbReference type="ChEBI" id="CHEBI:29961"/>
        <dbReference type="ChEBI" id="CHEBI:57844"/>
        <dbReference type="ChEBI" id="CHEBI:57856"/>
        <dbReference type="ChEBI" id="CHEBI:59789"/>
        <dbReference type="ChEBI" id="CHEBI:64428"/>
        <dbReference type="ChEBI" id="CHEBI:73599"/>
        <dbReference type="EC" id="2.8.4.4"/>
    </reaction>
</comment>
<comment type="cofactor">
    <cofactor evidence="1">
        <name>[4Fe-4S] cluster</name>
        <dbReference type="ChEBI" id="CHEBI:49883"/>
    </cofactor>
    <text evidence="1">Binds 2 [4Fe-4S] clusters. One cluster is coordinated with 3 cysteines and an exchangeable S-adenosyl-L-methionine.</text>
</comment>
<comment type="subcellular location">
    <subcellularLocation>
        <location evidence="1">Cytoplasm</location>
    </subcellularLocation>
</comment>
<comment type="similarity">
    <text evidence="1">Belongs to the methylthiotransferase family. RimO subfamily.</text>
</comment>
<proteinExistence type="inferred from homology"/>
<feature type="chain" id="PRO_0000374877" description="Ribosomal protein uS12 methylthiotransferase RimO">
    <location>
        <begin position="1"/>
        <end position="448"/>
    </location>
</feature>
<feature type="domain" description="MTTase N-terminal" evidence="1">
    <location>
        <begin position="13"/>
        <end position="128"/>
    </location>
</feature>
<feature type="domain" description="Radical SAM core" evidence="2">
    <location>
        <begin position="153"/>
        <end position="382"/>
    </location>
</feature>
<feature type="domain" description="TRAM" evidence="1">
    <location>
        <begin position="383"/>
        <end position="448"/>
    </location>
</feature>
<feature type="binding site" evidence="1">
    <location>
        <position position="22"/>
    </location>
    <ligand>
        <name>[4Fe-4S] cluster</name>
        <dbReference type="ChEBI" id="CHEBI:49883"/>
        <label>1</label>
    </ligand>
</feature>
<feature type="binding site" evidence="1">
    <location>
        <position position="58"/>
    </location>
    <ligand>
        <name>[4Fe-4S] cluster</name>
        <dbReference type="ChEBI" id="CHEBI:49883"/>
        <label>1</label>
    </ligand>
</feature>
<feature type="binding site" evidence="1">
    <location>
        <position position="91"/>
    </location>
    <ligand>
        <name>[4Fe-4S] cluster</name>
        <dbReference type="ChEBI" id="CHEBI:49883"/>
        <label>1</label>
    </ligand>
</feature>
<feature type="binding site" evidence="1">
    <location>
        <position position="167"/>
    </location>
    <ligand>
        <name>[4Fe-4S] cluster</name>
        <dbReference type="ChEBI" id="CHEBI:49883"/>
        <label>2</label>
        <note>4Fe-4S-S-AdoMet</note>
    </ligand>
</feature>
<feature type="binding site" evidence="1">
    <location>
        <position position="171"/>
    </location>
    <ligand>
        <name>[4Fe-4S] cluster</name>
        <dbReference type="ChEBI" id="CHEBI:49883"/>
        <label>2</label>
        <note>4Fe-4S-S-AdoMet</note>
    </ligand>
</feature>
<feature type="binding site" evidence="1">
    <location>
        <position position="174"/>
    </location>
    <ligand>
        <name>[4Fe-4S] cluster</name>
        <dbReference type="ChEBI" id="CHEBI:49883"/>
        <label>2</label>
        <note>4Fe-4S-S-AdoMet</note>
    </ligand>
</feature>
<reference key="1">
    <citation type="journal article" date="2008" name="PLoS ONE">
        <title>Genome sequence of the saprophyte Leptospira biflexa provides insights into the evolution of Leptospira and the pathogenesis of leptospirosis.</title>
        <authorList>
            <person name="Picardeau M."/>
            <person name="Bulach D.M."/>
            <person name="Bouchier C."/>
            <person name="Zuerner R.L."/>
            <person name="Zidane N."/>
            <person name="Wilson P.J."/>
            <person name="Creno S."/>
            <person name="Kuczek E.S."/>
            <person name="Bommezzadri S."/>
            <person name="Davis J.C."/>
            <person name="McGrath A."/>
            <person name="Johnson M.J."/>
            <person name="Boursaux-Eude C."/>
            <person name="Seemann T."/>
            <person name="Rouy Z."/>
            <person name="Coppel R.L."/>
            <person name="Rood J.I."/>
            <person name="Lajus A."/>
            <person name="Davies J.K."/>
            <person name="Medigue C."/>
            <person name="Adler B."/>
        </authorList>
    </citation>
    <scope>NUCLEOTIDE SEQUENCE [LARGE SCALE GENOMIC DNA]</scope>
    <source>
        <strain>Patoc 1 / Ames</strain>
    </source>
</reference>
<name>RIMO_LEPBA</name>
<keyword id="KW-0004">4Fe-4S</keyword>
<keyword id="KW-0963">Cytoplasm</keyword>
<keyword id="KW-0408">Iron</keyword>
<keyword id="KW-0411">Iron-sulfur</keyword>
<keyword id="KW-0479">Metal-binding</keyword>
<keyword id="KW-0949">S-adenosyl-L-methionine</keyword>
<keyword id="KW-0808">Transferase</keyword>
<accession>B0SGD8</accession>
<evidence type="ECO:0000255" key="1">
    <source>
        <dbReference type="HAMAP-Rule" id="MF_01865"/>
    </source>
</evidence>
<evidence type="ECO:0000255" key="2">
    <source>
        <dbReference type="PROSITE-ProRule" id="PRU01266"/>
    </source>
</evidence>
<gene>
    <name evidence="1" type="primary">rimO</name>
    <name type="ordered locus">LBF_1342</name>
</gene>